<comment type="function">
    <text evidence="1">Catalyzes the condensation reaction of fatty acid synthesis by the addition to an acyl acceptor of two carbons from malonyl-ACP. Catalyzes the first condensation reaction which initiates fatty acid synthesis and may therefore play a role in governing the total rate of fatty acid production. Possesses both acetoacetyl-ACP synthase and acetyl transacylase activities. Its substrate specificity determines the biosynthesis of branched-chain and/or straight-chain of fatty acids.</text>
</comment>
<comment type="catalytic activity">
    <reaction evidence="1">
        <text>malonyl-[ACP] + acetyl-CoA + H(+) = 3-oxobutanoyl-[ACP] + CO2 + CoA</text>
        <dbReference type="Rhea" id="RHEA:12080"/>
        <dbReference type="Rhea" id="RHEA-COMP:9623"/>
        <dbReference type="Rhea" id="RHEA-COMP:9625"/>
        <dbReference type="ChEBI" id="CHEBI:15378"/>
        <dbReference type="ChEBI" id="CHEBI:16526"/>
        <dbReference type="ChEBI" id="CHEBI:57287"/>
        <dbReference type="ChEBI" id="CHEBI:57288"/>
        <dbReference type="ChEBI" id="CHEBI:78449"/>
        <dbReference type="ChEBI" id="CHEBI:78450"/>
        <dbReference type="EC" id="2.3.1.180"/>
    </reaction>
</comment>
<comment type="pathway">
    <text evidence="1">Lipid metabolism; fatty acid biosynthesis.</text>
</comment>
<comment type="subunit">
    <text evidence="1">Homodimer.</text>
</comment>
<comment type="subcellular location">
    <subcellularLocation>
        <location evidence="1">Plastid</location>
        <location evidence="1">Chloroplast</location>
    </subcellularLocation>
</comment>
<comment type="domain">
    <text evidence="1">The last Arg residue of the ACP-binding site is essential for the weak association between ACP/AcpP and FabH.</text>
</comment>
<comment type="similarity">
    <text evidence="1">Belongs to the thiolase-like superfamily. FabH family.</text>
</comment>
<gene>
    <name evidence="1" type="primary">fabH</name>
</gene>
<protein>
    <recommendedName>
        <fullName evidence="1">Beta-ketoacyl-[acyl-carrier-protein] synthase III</fullName>
        <shortName evidence="1">Beta-ketoacyl-ACP synthase III</shortName>
        <shortName evidence="1">KAS III</shortName>
        <ecNumber evidence="1">2.3.1.180</ecNumber>
    </recommendedName>
    <alternativeName>
        <fullName evidence="1">3-oxoacyl-[acyl-carrier-protein] synthase 3</fullName>
    </alternativeName>
    <alternativeName>
        <fullName evidence="1">3-oxoacyl-[acyl-carrier-protein] synthase III</fullName>
    </alternativeName>
</protein>
<accession>P31176</accession>
<organism>
    <name type="scientific">Porphyra umbilicalis</name>
    <name type="common">Purple laver</name>
    <name type="synonym">Red alga</name>
    <dbReference type="NCBI Taxonomy" id="2786"/>
    <lineage>
        <taxon>Eukaryota</taxon>
        <taxon>Rhodophyta</taxon>
        <taxon>Bangiophyceae</taxon>
        <taxon>Bangiales</taxon>
        <taxon>Bangiaceae</taxon>
        <taxon>Porphyra</taxon>
    </lineage>
</organism>
<dbReference type="EC" id="2.3.1.180" evidence="1"/>
<dbReference type="EMBL" id="Z14034">
    <property type="protein sequence ID" value="CAA78410.1"/>
    <property type="molecule type" value="Genomic_DNA"/>
</dbReference>
<dbReference type="PIR" id="S30933">
    <property type="entry name" value="S30933"/>
</dbReference>
<dbReference type="SMR" id="P31176"/>
<dbReference type="OrthoDB" id="428487at2759"/>
<dbReference type="UniPathway" id="UPA00094"/>
<dbReference type="GO" id="GO:0009507">
    <property type="term" value="C:chloroplast"/>
    <property type="evidence" value="ECO:0007669"/>
    <property type="project" value="UniProtKB-SubCell"/>
</dbReference>
<dbReference type="GO" id="GO:0004315">
    <property type="term" value="F:3-oxoacyl-[acyl-carrier-protein] synthase activity"/>
    <property type="evidence" value="ECO:0007669"/>
    <property type="project" value="InterPro"/>
</dbReference>
<dbReference type="GO" id="GO:0033818">
    <property type="term" value="F:beta-ketoacyl-acyl-carrier-protein synthase III activity"/>
    <property type="evidence" value="ECO:0007669"/>
    <property type="project" value="UniProtKB-UniRule"/>
</dbReference>
<dbReference type="GO" id="GO:0006633">
    <property type="term" value="P:fatty acid biosynthetic process"/>
    <property type="evidence" value="ECO:0007669"/>
    <property type="project" value="UniProtKB-UniRule"/>
</dbReference>
<dbReference type="CDD" id="cd00830">
    <property type="entry name" value="KAS_III"/>
    <property type="match status" value="1"/>
</dbReference>
<dbReference type="FunFam" id="3.40.47.10:FF:000004">
    <property type="entry name" value="3-oxoacyl-[acyl-carrier-protein] synthase 3"/>
    <property type="match status" value="1"/>
</dbReference>
<dbReference type="Gene3D" id="3.40.47.10">
    <property type="match status" value="1"/>
</dbReference>
<dbReference type="HAMAP" id="MF_01815">
    <property type="entry name" value="FabH"/>
    <property type="match status" value="1"/>
</dbReference>
<dbReference type="InterPro" id="IPR013747">
    <property type="entry name" value="ACP_syn_III_C"/>
</dbReference>
<dbReference type="InterPro" id="IPR013751">
    <property type="entry name" value="ACP_syn_III_N"/>
</dbReference>
<dbReference type="InterPro" id="IPR004655">
    <property type="entry name" value="FabH"/>
</dbReference>
<dbReference type="InterPro" id="IPR016039">
    <property type="entry name" value="Thiolase-like"/>
</dbReference>
<dbReference type="NCBIfam" id="TIGR00747">
    <property type="entry name" value="fabH"/>
    <property type="match status" value="1"/>
</dbReference>
<dbReference type="NCBIfam" id="NF006829">
    <property type="entry name" value="PRK09352.1"/>
    <property type="match status" value="1"/>
</dbReference>
<dbReference type="PANTHER" id="PTHR43091">
    <property type="entry name" value="3-OXOACYL-[ACYL-CARRIER-PROTEIN] SYNTHASE"/>
    <property type="match status" value="1"/>
</dbReference>
<dbReference type="PANTHER" id="PTHR43091:SF1">
    <property type="entry name" value="BETA-KETOACYL-[ACYL-CARRIER-PROTEIN] SYNTHASE III, CHLOROPLASTIC"/>
    <property type="match status" value="1"/>
</dbReference>
<dbReference type="Pfam" id="PF08545">
    <property type="entry name" value="ACP_syn_III"/>
    <property type="match status" value="1"/>
</dbReference>
<dbReference type="Pfam" id="PF08541">
    <property type="entry name" value="ACP_syn_III_C"/>
    <property type="match status" value="1"/>
</dbReference>
<dbReference type="SUPFAM" id="SSF53901">
    <property type="entry name" value="Thiolase-like"/>
    <property type="match status" value="1"/>
</dbReference>
<geneLocation type="chloroplast"/>
<evidence type="ECO:0000255" key="1">
    <source>
        <dbReference type="HAMAP-Rule" id="MF_01815"/>
    </source>
</evidence>
<reference key="1">
    <citation type="journal article" date="1993" name="Plant Mol. Biol.">
        <title>A beta-ketoacyl-acyl carrier protein synthase III gene (fabH) is encoded on the chloroplast genome of the red alga Porphyra umbilicalis.</title>
        <authorList>
            <person name="Reith M."/>
        </authorList>
    </citation>
    <scope>NUCLEOTIDE SEQUENCE [GENOMIC DNA]</scope>
    <source>
        <strain>Avonport</strain>
    </source>
</reference>
<feature type="chain" id="PRO_0000110518" description="Beta-ketoacyl-[acyl-carrier-protein] synthase III">
    <location>
        <begin position="1"/>
        <end position="326"/>
    </location>
</feature>
<feature type="region of interest" description="ACP-binding" evidence="1">
    <location>
        <begin position="253"/>
        <end position="257"/>
    </location>
</feature>
<feature type="active site" evidence="1">
    <location>
        <position position="111"/>
    </location>
</feature>
<feature type="active site" evidence="1">
    <location>
        <position position="252"/>
    </location>
</feature>
<feature type="active site" evidence="1">
    <location>
        <position position="282"/>
    </location>
</feature>
<proteinExistence type="inferred from homology"/>
<keyword id="KW-0012">Acyltransferase</keyword>
<keyword id="KW-0150">Chloroplast</keyword>
<keyword id="KW-0275">Fatty acid biosynthesis</keyword>
<keyword id="KW-0276">Fatty acid metabolism</keyword>
<keyword id="KW-0444">Lipid biosynthesis</keyword>
<keyword id="KW-0443">Lipid metabolism</keyword>
<keyword id="KW-0511">Multifunctional enzyme</keyword>
<keyword id="KW-0934">Plastid</keyword>
<keyword id="KW-0808">Transferase</keyword>
<name>FABH_PORUM</name>
<sequence length="326" mass="35009">MGVHILSTGSSVPNFSVENQQFEDIIETSDHWISTRTGIKKSILPLLLPSLTKLAAEAANDALSKASINAEDIDLIILATSTPDDLFGSASQLQAEIGATSSTAFDITAACSGFIIALVTASQFIQAGSYNKVLVVGADTMSRWIDWSDRSSCILFGDGAGAVLIGESSINSILGFKLCTDGRLNSHLQLMNSPSDSQQFGLTTVPKGRYDSIRMNGKEVYKFAVFQVPIVIKNCLNDVNISIDEVDWFILHQANIRILEAIATRLSIPLSKMITNLENYGNTSAASIPLALDEAIKEKKIQPGQVVVLAGFGAGLTWGAIVLKWQ</sequence>